<sequence>MNTLNQQYEEKVRPCIDLIDSLRSLGVEKDLALPAIAVIGDQSSGKSSVLEALSGVALPRGSGIVTRCPLELKMKRKKEGEEWYGKISYRGCEKELEDPSDVENKIREAQDEMAGVGVGISDDLISLEIASPDVPDLTLIDLPGIARVAVKGQPEDIGKQIKGLIQRFITRQETISLVVVPCNVDIATTEALKMAQEVDPDGERTLGILTKPDLVDKGTEETVVEIVHNEVIHLKKGYMIVRCRGQKEITEKVSLTEALESEKAFFRDHVHFHTLYNEGQATVPKLAEKLTLELVHHIERSLPRLEEQIEDKLEQTQAELERYGSGPPSDATEKLFFLIDKVTAFTQDAISLTTGEDLKCGDKLNVFSALRREFARWNAHLDLSGEKFNKRIEKEVENYEEKYRGRELPGFINYKTFEVMVKEQIKQLEEPAVKRLKEIGDTVRKAFIQLAHSSFIGFPNLIKTAKAKIEAIKQEKESTAESMLRTQFKMELIVYTQDRTYSNSLSDRKREEDEEEDTRKGPVFAKQRSIVYRMDNHATLQELMLHIKSYYKIASQRLADQIPLVIRYQMLQESAAQLQREMLQMLQDKENMDFLLKEDCDIGSKRAGLQSRLKRLMKARAYLVEF</sequence>
<comment type="subcellular location">
    <subcellularLocation>
        <location evidence="1">Cytoplasm</location>
    </subcellularLocation>
</comment>
<comment type="induction">
    <text>By interferons.</text>
</comment>
<comment type="similarity">
    <text evidence="4">Belongs to the TRAFAC class dynamin-like GTPase superfamily. Dynamin/Fzo/YdjA family.</text>
</comment>
<dbReference type="EMBL" id="AY574372">
    <property type="protein sequence ID" value="AAS82739.1"/>
    <property type="molecule type" value="mRNA"/>
</dbReference>
<dbReference type="SMR" id="Q6PW23"/>
<dbReference type="GO" id="GO:0005737">
    <property type="term" value="C:cytoplasm"/>
    <property type="evidence" value="ECO:0007669"/>
    <property type="project" value="UniProtKB-SubCell"/>
</dbReference>
<dbReference type="GO" id="GO:0005874">
    <property type="term" value="C:microtubule"/>
    <property type="evidence" value="ECO:0007669"/>
    <property type="project" value="TreeGrafter"/>
</dbReference>
<dbReference type="GO" id="GO:0005634">
    <property type="term" value="C:nucleus"/>
    <property type="evidence" value="ECO:0007669"/>
    <property type="project" value="TreeGrafter"/>
</dbReference>
<dbReference type="GO" id="GO:0005886">
    <property type="term" value="C:plasma membrane"/>
    <property type="evidence" value="ECO:0007669"/>
    <property type="project" value="TreeGrafter"/>
</dbReference>
<dbReference type="GO" id="GO:0098793">
    <property type="term" value="C:presynapse"/>
    <property type="evidence" value="ECO:0007669"/>
    <property type="project" value="GOC"/>
</dbReference>
<dbReference type="GO" id="GO:0005525">
    <property type="term" value="F:GTP binding"/>
    <property type="evidence" value="ECO:0007669"/>
    <property type="project" value="UniProtKB-KW"/>
</dbReference>
<dbReference type="GO" id="GO:0003924">
    <property type="term" value="F:GTPase activity"/>
    <property type="evidence" value="ECO:0007669"/>
    <property type="project" value="InterPro"/>
</dbReference>
<dbReference type="GO" id="GO:0008017">
    <property type="term" value="F:microtubule binding"/>
    <property type="evidence" value="ECO:0007669"/>
    <property type="project" value="TreeGrafter"/>
</dbReference>
<dbReference type="GO" id="GO:0051607">
    <property type="term" value="P:defense response to virus"/>
    <property type="evidence" value="ECO:0007669"/>
    <property type="project" value="TreeGrafter"/>
</dbReference>
<dbReference type="GO" id="GO:0031623">
    <property type="term" value="P:receptor internalization"/>
    <property type="evidence" value="ECO:0007669"/>
    <property type="project" value="TreeGrafter"/>
</dbReference>
<dbReference type="GO" id="GO:0016185">
    <property type="term" value="P:synaptic vesicle budding from presynaptic endocytic zone membrane"/>
    <property type="evidence" value="ECO:0007669"/>
    <property type="project" value="TreeGrafter"/>
</dbReference>
<dbReference type="CDD" id="cd08771">
    <property type="entry name" value="DLP_1"/>
    <property type="match status" value="1"/>
</dbReference>
<dbReference type="FunFam" id="1.20.120.1240:FF:000007">
    <property type="entry name" value="Interferon-induced GTP-binding protein Mx1"/>
    <property type="match status" value="1"/>
</dbReference>
<dbReference type="FunFam" id="3.40.50.300:FF:000621">
    <property type="entry name" value="Interferon-induced GTP-binding protein Mx1"/>
    <property type="match status" value="1"/>
</dbReference>
<dbReference type="Gene3D" id="1.20.120.1240">
    <property type="entry name" value="Dynamin, middle domain"/>
    <property type="match status" value="1"/>
</dbReference>
<dbReference type="Gene3D" id="3.40.50.300">
    <property type="entry name" value="P-loop containing nucleotide triphosphate hydrolases"/>
    <property type="match status" value="1"/>
</dbReference>
<dbReference type="InterPro" id="IPR022812">
    <property type="entry name" value="Dynamin"/>
</dbReference>
<dbReference type="InterPro" id="IPR001401">
    <property type="entry name" value="Dynamin_GTPase"/>
</dbReference>
<dbReference type="InterPro" id="IPR019762">
    <property type="entry name" value="Dynamin_GTPase_CS"/>
</dbReference>
<dbReference type="InterPro" id="IPR045063">
    <property type="entry name" value="Dynamin_N"/>
</dbReference>
<dbReference type="InterPro" id="IPR000375">
    <property type="entry name" value="Dynamin_stalk"/>
</dbReference>
<dbReference type="InterPro" id="IPR030381">
    <property type="entry name" value="G_DYNAMIN_dom"/>
</dbReference>
<dbReference type="InterPro" id="IPR003130">
    <property type="entry name" value="GED"/>
</dbReference>
<dbReference type="InterPro" id="IPR020850">
    <property type="entry name" value="GED_dom"/>
</dbReference>
<dbReference type="InterPro" id="IPR027417">
    <property type="entry name" value="P-loop_NTPase"/>
</dbReference>
<dbReference type="PANTHER" id="PTHR11566">
    <property type="entry name" value="DYNAMIN"/>
    <property type="match status" value="1"/>
</dbReference>
<dbReference type="PANTHER" id="PTHR11566:SF225">
    <property type="entry name" value="INTERFERON-INDUCED GTP-BINDING PROTEIN MX-RELATED"/>
    <property type="match status" value="1"/>
</dbReference>
<dbReference type="Pfam" id="PF01031">
    <property type="entry name" value="Dynamin_M"/>
    <property type="match status" value="1"/>
</dbReference>
<dbReference type="Pfam" id="PF00350">
    <property type="entry name" value="Dynamin_N"/>
    <property type="match status" value="1"/>
</dbReference>
<dbReference type="Pfam" id="PF02212">
    <property type="entry name" value="GED"/>
    <property type="match status" value="1"/>
</dbReference>
<dbReference type="PRINTS" id="PR00195">
    <property type="entry name" value="DYNAMIN"/>
</dbReference>
<dbReference type="SMART" id="SM00053">
    <property type="entry name" value="DYNc"/>
    <property type="match status" value="1"/>
</dbReference>
<dbReference type="SMART" id="SM00302">
    <property type="entry name" value="GED"/>
    <property type="match status" value="1"/>
</dbReference>
<dbReference type="SUPFAM" id="SSF52540">
    <property type="entry name" value="P-loop containing nucleoside triphosphate hydrolases"/>
    <property type="match status" value="1"/>
</dbReference>
<dbReference type="PROSITE" id="PS00410">
    <property type="entry name" value="G_DYNAMIN_1"/>
    <property type="match status" value="1"/>
</dbReference>
<dbReference type="PROSITE" id="PS51718">
    <property type="entry name" value="G_DYNAMIN_2"/>
    <property type="match status" value="1"/>
</dbReference>
<dbReference type="PROSITE" id="PS51388">
    <property type="entry name" value="GED"/>
    <property type="match status" value="1"/>
</dbReference>
<gene>
    <name type="primary">mx</name>
</gene>
<accession>Q6PW23</accession>
<name>MX_EPICO</name>
<organism>
    <name type="scientific">Epinephelus coioides</name>
    <name type="common">Orange-spotted grouper</name>
    <name type="synonym">Epinephelus nebulosus</name>
    <dbReference type="NCBI Taxonomy" id="94232"/>
    <lineage>
        <taxon>Eukaryota</taxon>
        <taxon>Metazoa</taxon>
        <taxon>Chordata</taxon>
        <taxon>Craniata</taxon>
        <taxon>Vertebrata</taxon>
        <taxon>Euteleostomi</taxon>
        <taxon>Actinopterygii</taxon>
        <taxon>Neopterygii</taxon>
        <taxon>Teleostei</taxon>
        <taxon>Neoteleostei</taxon>
        <taxon>Acanthomorphata</taxon>
        <taxon>Eupercaria</taxon>
        <taxon>Perciformes</taxon>
        <taxon>Serranoidei</taxon>
        <taxon>Serranidae</taxon>
        <taxon>Epinephelinae</taxon>
        <taxon>Epinephelini</taxon>
        <taxon>Epinephelus</taxon>
    </lineage>
</organism>
<reference key="1">
    <citation type="journal article" date="2006" name="Fish Shellfish Immunol.">
        <title>Cloning of an orange-spotted grouper (Epinephelus coioides) Mx cDNA and characterisation of its expression in response to nodavirus.</title>
        <authorList>
            <person name="Chen Y.-M."/>
            <person name="Su Y.-L."/>
            <person name="Lin J.-H."/>
            <person name="Yang H.-L."/>
            <person name="Chen T.-Y."/>
        </authorList>
    </citation>
    <scope>NUCLEOTIDE SEQUENCE [MRNA]</scope>
</reference>
<evidence type="ECO:0000250" key="1"/>
<evidence type="ECO:0000255" key="2"/>
<evidence type="ECO:0000255" key="3">
    <source>
        <dbReference type="PROSITE-ProRule" id="PRU00720"/>
    </source>
</evidence>
<evidence type="ECO:0000255" key="4">
    <source>
        <dbReference type="PROSITE-ProRule" id="PRU01055"/>
    </source>
</evidence>
<keyword id="KW-0963">Cytoplasm</keyword>
<keyword id="KW-0342">GTP-binding</keyword>
<keyword id="KW-0547">Nucleotide-binding</keyword>
<proteinExistence type="evidence at transcript level"/>
<feature type="chain" id="PRO_0000292872" description="Interferon-induced GTP-binding protein Mx">
    <location>
        <begin position="1"/>
        <end position="626"/>
    </location>
</feature>
<feature type="domain" description="Dynamin-type G" evidence="4">
    <location>
        <begin position="30"/>
        <end position="303"/>
    </location>
</feature>
<feature type="domain" description="GED" evidence="3">
    <location>
        <begin position="540"/>
        <end position="626"/>
    </location>
</feature>
<feature type="region of interest" description="G1 motif" evidence="4">
    <location>
        <begin position="40"/>
        <end position="47"/>
    </location>
</feature>
<feature type="region of interest" description="G2 motif" evidence="4">
    <location>
        <begin position="65"/>
        <end position="67"/>
    </location>
</feature>
<feature type="region of interest" description="G3 motif" evidence="4">
    <location>
        <begin position="141"/>
        <end position="144"/>
    </location>
</feature>
<feature type="region of interest" description="G4 motif" evidence="4">
    <location>
        <begin position="210"/>
        <end position="213"/>
    </location>
</feature>
<feature type="region of interest" description="G5 motif" evidence="4">
    <location>
        <begin position="242"/>
        <end position="245"/>
    </location>
</feature>
<feature type="binding site" evidence="2">
    <location>
        <begin position="40"/>
        <end position="47"/>
    </location>
    <ligand>
        <name>GTP</name>
        <dbReference type="ChEBI" id="CHEBI:37565"/>
    </ligand>
</feature>
<feature type="binding site" evidence="2">
    <location>
        <begin position="141"/>
        <end position="145"/>
    </location>
    <ligand>
        <name>GTP</name>
        <dbReference type="ChEBI" id="CHEBI:37565"/>
    </ligand>
</feature>
<feature type="binding site" evidence="2">
    <location>
        <begin position="210"/>
        <end position="213"/>
    </location>
    <ligand>
        <name>GTP</name>
        <dbReference type="ChEBI" id="CHEBI:37565"/>
    </ligand>
</feature>
<protein>
    <recommendedName>
        <fullName>Interferon-induced GTP-binding protein Mx</fullName>
    </recommendedName>
    <alternativeName>
        <fullName>Interferon-inducible Mx protein</fullName>
    </alternativeName>
</protein>